<accession>Q5WFJ0</accession>
<sequence length="427" mass="45862">MAMKVTGGFILDENGEQVAKDVYIKDGKIVEHVADGDIRQQFDATGLLISPGFVDVHVHLREPGGEKKETIETGTKAAARGGFTTVAAMPNTRPVPDNAEQLDLLQARISETAVVRVLPYASITTRQLGQELTDFKALKEAGAFAFTDDGVGIQEAGMMLSAMKEAAALNMAVVAHCEDNSLINGGAVHEGHYAKAHGLNGIPSVCEAVHIARDVLLAEAAGAHYHVCHVSTKESVRTIRDAKKAGIRVTAEVTPHHLLLCEDDIIGKDPNFKMNPPLRAKEDRDALVAGLLDGTIDFIATDHAPHTAEEKSASLERAPFGIVGLETAFPLLYTHFVKPGTFTLKQLIDWLTVKPAQTFNLPYGTLQVGAAADLTLIDLKANETIDPSMFLSKGKNTPFAGWDCAGIPQATMVAGKTVYKKERITNE</sequence>
<evidence type="ECO:0000255" key="1">
    <source>
        <dbReference type="HAMAP-Rule" id="MF_00220"/>
    </source>
</evidence>
<feature type="chain" id="PRO_0000325587" description="Dihydroorotase">
    <location>
        <begin position="1"/>
        <end position="427"/>
    </location>
</feature>
<feature type="active site" evidence="1">
    <location>
        <position position="302"/>
    </location>
</feature>
<feature type="binding site" evidence="1">
    <location>
        <position position="57"/>
    </location>
    <ligand>
        <name>Zn(2+)</name>
        <dbReference type="ChEBI" id="CHEBI:29105"/>
        <label>1</label>
    </ligand>
</feature>
<feature type="binding site" evidence="1">
    <location>
        <begin position="59"/>
        <end position="61"/>
    </location>
    <ligand>
        <name>substrate</name>
    </ligand>
</feature>
<feature type="binding site" evidence="1">
    <location>
        <position position="59"/>
    </location>
    <ligand>
        <name>Zn(2+)</name>
        <dbReference type="ChEBI" id="CHEBI:29105"/>
        <label>1</label>
    </ligand>
</feature>
<feature type="binding site" evidence="1">
    <location>
        <position position="91"/>
    </location>
    <ligand>
        <name>substrate</name>
    </ligand>
</feature>
<feature type="binding site" evidence="1">
    <location>
        <position position="149"/>
    </location>
    <ligand>
        <name>Zn(2+)</name>
        <dbReference type="ChEBI" id="CHEBI:29105"/>
        <label>1</label>
    </ligand>
</feature>
<feature type="binding site" evidence="1">
    <location>
        <position position="149"/>
    </location>
    <ligand>
        <name>Zn(2+)</name>
        <dbReference type="ChEBI" id="CHEBI:29105"/>
        <label>2</label>
    </ligand>
</feature>
<feature type="binding site" evidence="1">
    <location>
        <position position="176"/>
    </location>
    <ligand>
        <name>Zn(2+)</name>
        <dbReference type="ChEBI" id="CHEBI:29105"/>
        <label>2</label>
    </ligand>
</feature>
<feature type="binding site" evidence="1">
    <location>
        <position position="229"/>
    </location>
    <ligand>
        <name>Zn(2+)</name>
        <dbReference type="ChEBI" id="CHEBI:29105"/>
        <label>2</label>
    </ligand>
</feature>
<feature type="binding site" evidence="1">
    <location>
        <position position="275"/>
    </location>
    <ligand>
        <name>substrate</name>
    </ligand>
</feature>
<feature type="binding site" evidence="1">
    <location>
        <position position="302"/>
    </location>
    <ligand>
        <name>Zn(2+)</name>
        <dbReference type="ChEBI" id="CHEBI:29105"/>
        <label>1</label>
    </ligand>
</feature>
<feature type="binding site" evidence="1">
    <location>
        <position position="306"/>
    </location>
    <ligand>
        <name>substrate</name>
    </ligand>
</feature>
<feature type="binding site" evidence="1">
    <location>
        <begin position="320"/>
        <end position="321"/>
    </location>
    <ligand>
        <name>substrate</name>
    </ligand>
</feature>
<organism>
    <name type="scientific">Shouchella clausii (strain KSM-K16)</name>
    <name type="common">Alkalihalobacillus clausii</name>
    <dbReference type="NCBI Taxonomy" id="66692"/>
    <lineage>
        <taxon>Bacteria</taxon>
        <taxon>Bacillati</taxon>
        <taxon>Bacillota</taxon>
        <taxon>Bacilli</taxon>
        <taxon>Bacillales</taxon>
        <taxon>Bacillaceae</taxon>
        <taxon>Shouchella</taxon>
    </lineage>
</organism>
<comment type="function">
    <text evidence="1">Catalyzes the reversible cyclization of carbamoyl aspartate to dihydroorotate.</text>
</comment>
<comment type="catalytic activity">
    <reaction evidence="1">
        <text>(S)-dihydroorotate + H2O = N-carbamoyl-L-aspartate + H(+)</text>
        <dbReference type="Rhea" id="RHEA:24296"/>
        <dbReference type="ChEBI" id="CHEBI:15377"/>
        <dbReference type="ChEBI" id="CHEBI:15378"/>
        <dbReference type="ChEBI" id="CHEBI:30864"/>
        <dbReference type="ChEBI" id="CHEBI:32814"/>
        <dbReference type="EC" id="3.5.2.3"/>
    </reaction>
</comment>
<comment type="cofactor">
    <cofactor evidence="1">
        <name>Zn(2+)</name>
        <dbReference type="ChEBI" id="CHEBI:29105"/>
    </cofactor>
    <text evidence="1">Binds 2 Zn(2+) ions per subunit.</text>
</comment>
<comment type="pathway">
    <text evidence="1">Pyrimidine metabolism; UMP biosynthesis via de novo pathway; (S)-dihydroorotate from bicarbonate: step 3/3.</text>
</comment>
<comment type="similarity">
    <text evidence="1">Belongs to the metallo-dependent hydrolases superfamily. DHOase family. Class I DHOase subfamily.</text>
</comment>
<name>PYRC_SHOC1</name>
<reference key="1">
    <citation type="submission" date="2003-10" db="EMBL/GenBank/DDBJ databases">
        <title>The complete genome sequence of the alkaliphilic Bacillus clausii KSM-K16.</title>
        <authorList>
            <person name="Takaki Y."/>
            <person name="Kageyama Y."/>
            <person name="Shimamura S."/>
            <person name="Suzuki H."/>
            <person name="Nishi S."/>
            <person name="Hatada Y."/>
            <person name="Kawai S."/>
            <person name="Ito S."/>
            <person name="Horikoshi K."/>
        </authorList>
    </citation>
    <scope>NUCLEOTIDE SEQUENCE [LARGE SCALE GENOMIC DNA]</scope>
    <source>
        <strain>KSM-K16</strain>
    </source>
</reference>
<proteinExistence type="inferred from homology"/>
<dbReference type="EC" id="3.5.2.3" evidence="1"/>
<dbReference type="EMBL" id="AP006627">
    <property type="protein sequence ID" value="BAD64870.1"/>
    <property type="molecule type" value="Genomic_DNA"/>
</dbReference>
<dbReference type="RefSeq" id="WP_011247178.1">
    <property type="nucleotide sequence ID" value="NC_006582.1"/>
</dbReference>
<dbReference type="SMR" id="Q5WFJ0"/>
<dbReference type="STRING" id="66692.ABC2335"/>
<dbReference type="KEGG" id="bcl:ABC2335"/>
<dbReference type="eggNOG" id="COG0044">
    <property type="taxonomic scope" value="Bacteria"/>
</dbReference>
<dbReference type="HOGENOM" id="CLU_015572_1_0_9"/>
<dbReference type="OrthoDB" id="9765462at2"/>
<dbReference type="UniPathway" id="UPA00070">
    <property type="reaction ID" value="UER00117"/>
</dbReference>
<dbReference type="Proteomes" id="UP000001168">
    <property type="component" value="Chromosome"/>
</dbReference>
<dbReference type="GO" id="GO:0005737">
    <property type="term" value="C:cytoplasm"/>
    <property type="evidence" value="ECO:0007669"/>
    <property type="project" value="TreeGrafter"/>
</dbReference>
<dbReference type="GO" id="GO:0004038">
    <property type="term" value="F:allantoinase activity"/>
    <property type="evidence" value="ECO:0007669"/>
    <property type="project" value="TreeGrafter"/>
</dbReference>
<dbReference type="GO" id="GO:0004151">
    <property type="term" value="F:dihydroorotase activity"/>
    <property type="evidence" value="ECO:0007669"/>
    <property type="project" value="UniProtKB-UniRule"/>
</dbReference>
<dbReference type="GO" id="GO:0008270">
    <property type="term" value="F:zinc ion binding"/>
    <property type="evidence" value="ECO:0007669"/>
    <property type="project" value="UniProtKB-UniRule"/>
</dbReference>
<dbReference type="GO" id="GO:0044205">
    <property type="term" value="P:'de novo' UMP biosynthetic process"/>
    <property type="evidence" value="ECO:0007669"/>
    <property type="project" value="UniProtKB-UniRule"/>
</dbReference>
<dbReference type="GO" id="GO:0006145">
    <property type="term" value="P:purine nucleobase catabolic process"/>
    <property type="evidence" value="ECO:0007669"/>
    <property type="project" value="TreeGrafter"/>
</dbReference>
<dbReference type="CDD" id="cd01317">
    <property type="entry name" value="DHOase_IIa"/>
    <property type="match status" value="1"/>
</dbReference>
<dbReference type="Gene3D" id="3.20.20.140">
    <property type="entry name" value="Metal-dependent hydrolases"/>
    <property type="match status" value="1"/>
</dbReference>
<dbReference type="Gene3D" id="2.30.40.10">
    <property type="entry name" value="Urease, subunit C, domain 1"/>
    <property type="match status" value="1"/>
</dbReference>
<dbReference type="HAMAP" id="MF_00220_B">
    <property type="entry name" value="PyrC_classI_B"/>
    <property type="match status" value="1"/>
</dbReference>
<dbReference type="InterPro" id="IPR006680">
    <property type="entry name" value="Amidohydro-rel"/>
</dbReference>
<dbReference type="InterPro" id="IPR004722">
    <property type="entry name" value="DHOase"/>
</dbReference>
<dbReference type="InterPro" id="IPR050138">
    <property type="entry name" value="DHOase/Allantoinase_Hydrolase"/>
</dbReference>
<dbReference type="InterPro" id="IPR002195">
    <property type="entry name" value="Dihydroorotase_CS"/>
</dbReference>
<dbReference type="InterPro" id="IPR011059">
    <property type="entry name" value="Metal-dep_hydrolase_composite"/>
</dbReference>
<dbReference type="InterPro" id="IPR032466">
    <property type="entry name" value="Metal_Hydrolase"/>
</dbReference>
<dbReference type="NCBIfam" id="NF006837">
    <property type="entry name" value="PRK09357.1-2"/>
    <property type="match status" value="1"/>
</dbReference>
<dbReference type="NCBIfam" id="TIGR00857">
    <property type="entry name" value="pyrC_multi"/>
    <property type="match status" value="1"/>
</dbReference>
<dbReference type="PANTHER" id="PTHR43668">
    <property type="entry name" value="ALLANTOINASE"/>
    <property type="match status" value="1"/>
</dbReference>
<dbReference type="PANTHER" id="PTHR43668:SF2">
    <property type="entry name" value="ALLANTOINASE"/>
    <property type="match status" value="1"/>
</dbReference>
<dbReference type="Pfam" id="PF01979">
    <property type="entry name" value="Amidohydro_1"/>
    <property type="match status" value="1"/>
</dbReference>
<dbReference type="SUPFAM" id="SSF51338">
    <property type="entry name" value="Composite domain of metallo-dependent hydrolases"/>
    <property type="match status" value="1"/>
</dbReference>
<dbReference type="SUPFAM" id="SSF51556">
    <property type="entry name" value="Metallo-dependent hydrolases"/>
    <property type="match status" value="1"/>
</dbReference>
<dbReference type="PROSITE" id="PS00482">
    <property type="entry name" value="DIHYDROOROTASE_1"/>
    <property type="match status" value="1"/>
</dbReference>
<dbReference type="PROSITE" id="PS00483">
    <property type="entry name" value="DIHYDROOROTASE_2"/>
    <property type="match status" value="1"/>
</dbReference>
<gene>
    <name evidence="1" type="primary">pyrC</name>
    <name type="ordered locus">ABC2335</name>
</gene>
<protein>
    <recommendedName>
        <fullName evidence="1">Dihydroorotase</fullName>
        <shortName evidence="1">DHOase</shortName>
        <ecNumber evidence="1">3.5.2.3</ecNumber>
    </recommendedName>
</protein>
<keyword id="KW-0378">Hydrolase</keyword>
<keyword id="KW-0479">Metal-binding</keyword>
<keyword id="KW-0665">Pyrimidine biosynthesis</keyword>
<keyword id="KW-1185">Reference proteome</keyword>
<keyword id="KW-0862">Zinc</keyword>